<comment type="function">
    <text evidence="1">Hydrolyzes ribosome-free peptidyl-tRNAs (with 1 or more amino acids incorporated), which drop off the ribosome during protein synthesis, or as a result of ribosome stalling.</text>
</comment>
<comment type="function">
    <text evidence="1">Catalyzes the release of premature peptidyl moieties from peptidyl-tRNA molecules trapped in stalled 50S ribosomal subunits, and thus maintains levels of free tRNAs and 50S ribosomes.</text>
</comment>
<comment type="catalytic activity">
    <reaction evidence="1">
        <text>an N-acyl-L-alpha-aminoacyl-tRNA + H2O = an N-acyl-L-amino acid + a tRNA + H(+)</text>
        <dbReference type="Rhea" id="RHEA:54448"/>
        <dbReference type="Rhea" id="RHEA-COMP:10123"/>
        <dbReference type="Rhea" id="RHEA-COMP:13883"/>
        <dbReference type="ChEBI" id="CHEBI:15377"/>
        <dbReference type="ChEBI" id="CHEBI:15378"/>
        <dbReference type="ChEBI" id="CHEBI:59874"/>
        <dbReference type="ChEBI" id="CHEBI:78442"/>
        <dbReference type="ChEBI" id="CHEBI:138191"/>
        <dbReference type="EC" id="3.1.1.29"/>
    </reaction>
</comment>
<comment type="subunit">
    <text evidence="1">Monomer.</text>
</comment>
<comment type="subcellular location">
    <subcellularLocation>
        <location evidence="1">Cytoplasm</location>
    </subcellularLocation>
</comment>
<comment type="similarity">
    <text evidence="1">Belongs to the PTH family.</text>
</comment>
<feature type="chain" id="PRO_1000092967" description="Peptidyl-tRNA hydrolase">
    <location>
        <begin position="1"/>
        <end position="196"/>
    </location>
</feature>
<feature type="active site" description="Proton acceptor" evidence="1">
    <location>
        <position position="20"/>
    </location>
</feature>
<feature type="binding site" evidence="1">
    <location>
        <position position="15"/>
    </location>
    <ligand>
        <name>tRNA</name>
        <dbReference type="ChEBI" id="CHEBI:17843"/>
    </ligand>
</feature>
<feature type="binding site" evidence="1">
    <location>
        <position position="66"/>
    </location>
    <ligand>
        <name>tRNA</name>
        <dbReference type="ChEBI" id="CHEBI:17843"/>
    </ligand>
</feature>
<feature type="binding site" evidence="1">
    <location>
        <position position="68"/>
    </location>
    <ligand>
        <name>tRNA</name>
        <dbReference type="ChEBI" id="CHEBI:17843"/>
    </ligand>
</feature>
<feature type="binding site" evidence="1">
    <location>
        <position position="114"/>
    </location>
    <ligand>
        <name>tRNA</name>
        <dbReference type="ChEBI" id="CHEBI:17843"/>
    </ligand>
</feature>
<feature type="site" description="Discriminates between blocked and unblocked aminoacyl-tRNA" evidence="1">
    <location>
        <position position="10"/>
    </location>
</feature>
<feature type="site" description="Stabilizes the basic form of H active site to accept a proton" evidence="1">
    <location>
        <position position="93"/>
    </location>
</feature>
<sequence length="196" mass="21724">MTKLIVGLGNPGEEHEEDRHNAGFWFVDALAKQLGVRFESEKRFHGKVAKAKWEGEDLFLLKPSTYMNLSGQSVGALCRFHKIMPADILVVQDELDIKPGSARLKLGGGTGGHNGLKDIQAHLSTPNYWRLRLGIGHPRDIAGDGRPMDVADYVLRRPQLTEQKLINTSIENGLNILSLFLKGDTQTAMMELHSKG</sequence>
<keyword id="KW-0963">Cytoplasm</keyword>
<keyword id="KW-0378">Hydrolase</keyword>
<keyword id="KW-0694">RNA-binding</keyword>
<keyword id="KW-0820">tRNA-binding</keyword>
<protein>
    <recommendedName>
        <fullName evidence="1">Peptidyl-tRNA hydrolase</fullName>
        <shortName evidence="1">Pth</shortName>
        <ecNumber evidence="1">3.1.1.29</ecNumber>
    </recommendedName>
</protein>
<gene>
    <name evidence="1" type="primary">pth</name>
    <name type="ordered locus">Pnec_1627</name>
</gene>
<accession>B1XS66</accession>
<organism>
    <name type="scientific">Polynucleobacter necessarius subsp. necessarius (strain STIR1)</name>
    <dbReference type="NCBI Taxonomy" id="452638"/>
    <lineage>
        <taxon>Bacteria</taxon>
        <taxon>Pseudomonadati</taxon>
        <taxon>Pseudomonadota</taxon>
        <taxon>Betaproteobacteria</taxon>
        <taxon>Burkholderiales</taxon>
        <taxon>Burkholderiaceae</taxon>
        <taxon>Polynucleobacter</taxon>
    </lineage>
</organism>
<proteinExistence type="inferred from homology"/>
<name>PTH_POLNS</name>
<reference key="1">
    <citation type="journal article" date="2013" name="Proc. Natl. Acad. Sci. U.S.A.">
        <title>Polynucleobacter necessarius, a model for genome reduction in both free-living and symbiotic bacteria.</title>
        <authorList>
            <person name="Boscaro V."/>
            <person name="Felletti M."/>
            <person name="Vannini C."/>
            <person name="Ackerman M.S."/>
            <person name="Chain P.S."/>
            <person name="Malfatti S."/>
            <person name="Vergez L.M."/>
            <person name="Shin M."/>
            <person name="Doak T.G."/>
            <person name="Lynch M."/>
            <person name="Petroni G."/>
        </authorList>
    </citation>
    <scope>NUCLEOTIDE SEQUENCE [LARGE SCALE GENOMIC DNA]</scope>
    <source>
        <strain>STIR1</strain>
    </source>
</reference>
<evidence type="ECO:0000255" key="1">
    <source>
        <dbReference type="HAMAP-Rule" id="MF_00083"/>
    </source>
</evidence>
<dbReference type="EC" id="3.1.1.29" evidence="1"/>
<dbReference type="EMBL" id="CP001010">
    <property type="protein sequence ID" value="ACB44701.1"/>
    <property type="molecule type" value="Genomic_DNA"/>
</dbReference>
<dbReference type="SMR" id="B1XS66"/>
<dbReference type="STRING" id="452638.Pnec_1627"/>
<dbReference type="KEGG" id="pne:Pnec_1627"/>
<dbReference type="eggNOG" id="COG0193">
    <property type="taxonomic scope" value="Bacteria"/>
</dbReference>
<dbReference type="HOGENOM" id="CLU_062456_3_1_4"/>
<dbReference type="OrthoDB" id="9800507at2"/>
<dbReference type="GO" id="GO:0005737">
    <property type="term" value="C:cytoplasm"/>
    <property type="evidence" value="ECO:0007669"/>
    <property type="project" value="UniProtKB-SubCell"/>
</dbReference>
<dbReference type="GO" id="GO:0004045">
    <property type="term" value="F:peptidyl-tRNA hydrolase activity"/>
    <property type="evidence" value="ECO:0007669"/>
    <property type="project" value="UniProtKB-UniRule"/>
</dbReference>
<dbReference type="GO" id="GO:0000049">
    <property type="term" value="F:tRNA binding"/>
    <property type="evidence" value="ECO:0007669"/>
    <property type="project" value="UniProtKB-UniRule"/>
</dbReference>
<dbReference type="GO" id="GO:0006515">
    <property type="term" value="P:protein quality control for misfolded or incompletely synthesized proteins"/>
    <property type="evidence" value="ECO:0007669"/>
    <property type="project" value="UniProtKB-UniRule"/>
</dbReference>
<dbReference type="GO" id="GO:0072344">
    <property type="term" value="P:rescue of stalled ribosome"/>
    <property type="evidence" value="ECO:0007669"/>
    <property type="project" value="UniProtKB-UniRule"/>
</dbReference>
<dbReference type="CDD" id="cd00462">
    <property type="entry name" value="PTH"/>
    <property type="match status" value="1"/>
</dbReference>
<dbReference type="FunFam" id="3.40.50.1470:FF:000001">
    <property type="entry name" value="Peptidyl-tRNA hydrolase"/>
    <property type="match status" value="1"/>
</dbReference>
<dbReference type="Gene3D" id="3.40.50.1470">
    <property type="entry name" value="Peptidyl-tRNA hydrolase"/>
    <property type="match status" value="1"/>
</dbReference>
<dbReference type="HAMAP" id="MF_00083">
    <property type="entry name" value="Pept_tRNA_hydro_bact"/>
    <property type="match status" value="1"/>
</dbReference>
<dbReference type="InterPro" id="IPR001328">
    <property type="entry name" value="Pept_tRNA_hydro"/>
</dbReference>
<dbReference type="InterPro" id="IPR018171">
    <property type="entry name" value="Pept_tRNA_hydro_CS"/>
</dbReference>
<dbReference type="InterPro" id="IPR036416">
    <property type="entry name" value="Pept_tRNA_hydro_sf"/>
</dbReference>
<dbReference type="NCBIfam" id="TIGR00447">
    <property type="entry name" value="pth"/>
    <property type="match status" value="1"/>
</dbReference>
<dbReference type="PANTHER" id="PTHR17224">
    <property type="entry name" value="PEPTIDYL-TRNA HYDROLASE"/>
    <property type="match status" value="1"/>
</dbReference>
<dbReference type="PANTHER" id="PTHR17224:SF1">
    <property type="entry name" value="PEPTIDYL-TRNA HYDROLASE"/>
    <property type="match status" value="1"/>
</dbReference>
<dbReference type="Pfam" id="PF01195">
    <property type="entry name" value="Pept_tRNA_hydro"/>
    <property type="match status" value="1"/>
</dbReference>
<dbReference type="SUPFAM" id="SSF53178">
    <property type="entry name" value="Peptidyl-tRNA hydrolase-like"/>
    <property type="match status" value="1"/>
</dbReference>
<dbReference type="PROSITE" id="PS01196">
    <property type="entry name" value="PEPT_TRNA_HYDROL_2"/>
    <property type="match status" value="1"/>
</dbReference>